<protein>
    <recommendedName>
        <fullName>Phycoerythrin alpha-2 chain, chloroplastic</fullName>
    </recommendedName>
</protein>
<organism>
    <name type="scientific">Rhodomonas sp. (strain CS 24)</name>
    <name type="common">Chroomonas sp. (strain CS24)</name>
    <dbReference type="NCBI Taxonomy" id="79257"/>
    <lineage>
        <taxon>Eukaryota</taxon>
        <taxon>Cryptophyceae</taxon>
        <taxon>Pyrenomonadales</taxon>
        <taxon>Pyrenomonadaceae</taxon>
        <taxon>Rhodomonas</taxon>
    </lineage>
</organism>
<evidence type="ECO:0000269" key="1">
    <source>
    </source>
</evidence>
<evidence type="ECO:0000269" key="2">
    <source>
    </source>
</evidence>
<evidence type="ECO:0000269" key="3">
    <source>
    </source>
</evidence>
<evidence type="ECO:0000305" key="4"/>
<evidence type="ECO:0007829" key="5">
    <source>
        <dbReference type="PDB" id="1XG0"/>
    </source>
</evidence>
<comment type="function">
    <text>Light-harvesting photosynthetic tetrapyrrole chromophore-protein from the phycobiliprotein complex.</text>
</comment>
<comment type="subunit">
    <text evidence="1 2">Heterotetramer of 2 different alpha chains and 2 identical beta chains. The subunit composition could comprise of any combination of 2 out of 4 different alpha units with an invariant beta unit.</text>
</comment>
<comment type="subcellular location">
    <subcellularLocation>
        <location>Plastid</location>
        <location>Chloroplast thylakoid membrane</location>
        <topology>Peripheral membrane protein</topology>
        <orientation>Lumenal side</orientation>
    </subcellularLocation>
</comment>
<comment type="PTM">
    <text>Contains one covalently linked 15,16-dihydrobiliverdin chromophore.</text>
</comment>
<comment type="miscellaneous">
    <text>The light-harvesting system in Cryptophytes contains phycobiliprotein complexes. Unusually they are composed of either phycoerythrin (CPE) or phycocyanin (CPC) but never allophycocyanin (APC), with only one type of biliprotein being present in any one species. Unlike cyanobacteria or red algae these proteins are not arranged into higher-order phycobilisome complexes, and they are found in the thylakoid lumen.</text>
</comment>
<comment type="similarity">
    <text evidence="4">Belongs to the phycoerythrin family.</text>
</comment>
<proteinExistence type="evidence at protein level"/>
<sequence length="104" mass="10696">MSAKIIAFSAVVATASAFAPTAGFVPRLRSGATSVNMAMDKSAKAPVITIFDHRGCSRAPKEYTGAKAGGKDDEMMVKAQSVKIEVSTGTAEGVLATSLAKMTK</sequence>
<dbReference type="EMBL" id="AJ006994">
    <property type="protein sequence ID" value="CAD20039.1"/>
    <property type="molecule type" value="Genomic_DNA"/>
</dbReference>
<dbReference type="PIR" id="T10881">
    <property type="entry name" value="T10881"/>
</dbReference>
<dbReference type="PDB" id="1QGW">
    <property type="method" value="X-ray"/>
    <property type="resolution" value="1.63 A"/>
    <property type="chains" value="B=38-104"/>
</dbReference>
<dbReference type="PDB" id="1XF6">
    <property type="method" value="X-ray"/>
    <property type="resolution" value="1.10 A"/>
    <property type="chains" value="B=38-104"/>
</dbReference>
<dbReference type="PDB" id="1XG0">
    <property type="method" value="X-ray"/>
    <property type="resolution" value="0.97 A"/>
    <property type="chains" value="B=38-104"/>
</dbReference>
<dbReference type="PDBsum" id="1QGW"/>
<dbReference type="PDBsum" id="1XF6"/>
<dbReference type="PDBsum" id="1XG0"/>
<dbReference type="SMR" id="P30943"/>
<dbReference type="EvolutionaryTrace" id="P30943"/>
<dbReference type="GO" id="GO:0009535">
    <property type="term" value="C:chloroplast thylakoid membrane"/>
    <property type="evidence" value="ECO:0007669"/>
    <property type="project" value="UniProtKB-SubCell"/>
</dbReference>
<dbReference type="GO" id="GO:0030089">
    <property type="term" value="C:phycobilisome"/>
    <property type="evidence" value="ECO:0007669"/>
    <property type="project" value="InterPro"/>
</dbReference>
<dbReference type="GO" id="GO:0015979">
    <property type="term" value="P:photosynthesis"/>
    <property type="evidence" value="ECO:0007669"/>
    <property type="project" value="UniProtKB-KW"/>
</dbReference>
<dbReference type="Gene3D" id="3.90.510.10">
    <property type="entry name" value="Phycoerythrin alpha chain"/>
    <property type="match status" value="1"/>
</dbReference>
<dbReference type="InterPro" id="IPR011070">
    <property type="entry name" value="Globular_prot_asu/bsu"/>
</dbReference>
<dbReference type="InterPro" id="IPR037011">
    <property type="entry name" value="Phycoerythr-like_a_sf"/>
</dbReference>
<dbReference type="InterPro" id="IPR004228">
    <property type="entry name" value="Phycoerythr_a"/>
</dbReference>
<dbReference type="Pfam" id="PF02972">
    <property type="entry name" value="Phycoerythr_ab"/>
    <property type="match status" value="1"/>
</dbReference>
<dbReference type="SUPFAM" id="SSF56568">
    <property type="entry name" value="Non-globular alpha+beta subunits of globular proteins"/>
    <property type="match status" value="1"/>
</dbReference>
<reference key="1">
    <citation type="submission" date="2001-11" db="EMBL/GenBank/DDBJ databases">
        <title>Nuclear-encoded genes of phycoerythrin alpha subunits.</title>
        <authorList>
            <person name="Hiller R.G."/>
            <person name="Howe C.E."/>
        </authorList>
    </citation>
    <scope>NUCLEOTIDE SEQUENCE [GENOMIC DNA]</scope>
</reference>
<reference key="2">
    <citation type="journal article" date="1990" name="FEBS Lett.">
        <title>A genomic clone encoding a cryptophyte phycoerythrin alpha-subunit. Evidence for three alpha-subunits and an N-terminal membrane transit sequence.</title>
        <authorList>
            <person name="Jenkins J."/>
            <person name="Hiller R.G."/>
            <person name="Speirs J."/>
            <person name="Godovac-Zimmermann J."/>
        </authorList>
    </citation>
    <scope>PROTEIN SEQUENCE OF 38-82</scope>
</reference>
<reference key="3">
    <citation type="journal article" date="1999" name="Proc. Natl. Acad. Sci. U.S.A.">
        <title>Evolution of a light-harvesting protein by addition of new subunits and rearrangement of conserved elements: crystal structure of a cryptophyte phycoerythrin at 1.63-A resolution.</title>
        <authorList>
            <person name="Wilk K.E."/>
            <person name="Harrop S.J."/>
            <person name="Jankova L."/>
            <person name="Edler D."/>
            <person name="Keenan G."/>
            <person name="Sharples F."/>
            <person name="Hiller R.G."/>
            <person name="Curmi P.M."/>
        </authorList>
    </citation>
    <scope>X-RAY CRYSTALLOGRAPHY (1.63 ANGSTROMS) OF 38-104 IN COMPLEX WITH CPEA2; CPEA3 AND 15,16-DIHYDROBILIVERDIN</scope>
    <scope>SUBUNIT</scope>
    <scope>HYDROXYLATION AT LYS-41</scope>
</reference>
<reference key="4">
    <citation type="journal article" date="2004" name="J. Mol. Biol.">
        <title>Developing a structure-function model for the cryptophyte phycoerythrin 545 using ultrahigh resolution crystallography and ultrafast laser spectroscopy.</title>
        <authorList>
            <person name="Doust A.B."/>
            <person name="Marai C.N."/>
            <person name="Harrop S.J."/>
            <person name="Wilk K.E."/>
            <person name="Curmi P.M."/>
            <person name="Scholes G.D."/>
        </authorList>
    </citation>
    <scope>X-RAY CRYSTALLOGRAPHY (0.97 ANGSTROMS) OF 38-104 IN COMPLEX WITH CPEA2; CPEA3 AND 15,16-DIHYDROBILIVERDIN</scope>
    <scope>SUBUNIT</scope>
</reference>
<name>PHE2_RHDS2</name>
<feature type="transit peptide" description="Chloroplast" evidence="3">
    <location>
        <begin position="1"/>
        <end position="37"/>
    </location>
</feature>
<feature type="chain" id="PRO_0000002827" description="Phycoerythrin alpha-2 chain, chloroplastic">
    <location>
        <begin position="38"/>
        <end position="104"/>
    </location>
</feature>
<feature type="region of interest" description="15,16-dihydrobiliverdin chromophore">
    <location>
        <begin position="61"/>
        <end position="63"/>
    </location>
</feature>
<feature type="binding site" description="covalent" evidence="1 2">
    <location>
        <position position="56"/>
    </location>
    <ligand>
        <name>15,16-dihydrobiliverdin</name>
        <dbReference type="ChEBI" id="CHEBI:57899"/>
    </ligand>
</feature>
<feature type="binding site" evidence="1 2">
    <location>
        <position position="58"/>
    </location>
    <ligand>
        <name>15,16-dihydrobiliverdin</name>
        <dbReference type="ChEBI" id="CHEBI:57899"/>
    </ligand>
</feature>
<feature type="binding site" evidence="1 2">
    <location>
        <position position="78"/>
    </location>
    <ligand>
        <name>15,16-dihydrobiliverdin</name>
        <dbReference type="ChEBI" id="CHEBI:57899"/>
    </ligand>
</feature>
<feature type="modified residue" description="5-hydroxylysine" evidence="1">
    <location>
        <position position="41"/>
    </location>
</feature>
<feature type="sequence conflict" description="In Ref. 2; AA sequence." evidence="4" ref="2">
    <original>YTGAKAGGKDDE</original>
    <variation>TSKSGKSGQDDT</variation>
    <location>
        <begin position="63"/>
        <end position="74"/>
    </location>
</feature>
<feature type="strand" evidence="5">
    <location>
        <begin position="44"/>
        <end position="52"/>
    </location>
</feature>
<feature type="helix" evidence="5">
    <location>
        <begin position="71"/>
        <end position="74"/>
    </location>
</feature>
<feature type="strand" evidence="5">
    <location>
        <begin position="75"/>
        <end position="83"/>
    </location>
</feature>
<feature type="helix" evidence="5">
    <location>
        <begin position="88"/>
        <end position="101"/>
    </location>
</feature>
<gene>
    <name type="primary">cpeA2</name>
</gene>
<accession>P30943</accession>
<accession>Q8VX02</accession>
<keyword id="KW-0002">3D-structure</keyword>
<keyword id="KW-0089">Bile pigment</keyword>
<keyword id="KW-0150">Chloroplast</keyword>
<keyword id="KW-0157">Chromophore</keyword>
<keyword id="KW-0903">Direct protein sequencing</keyword>
<keyword id="KW-0249">Electron transport</keyword>
<keyword id="KW-0379">Hydroxylation</keyword>
<keyword id="KW-0472">Membrane</keyword>
<keyword id="KW-0602">Photosynthesis</keyword>
<keyword id="KW-0934">Plastid</keyword>
<keyword id="KW-0793">Thylakoid</keyword>
<keyword id="KW-0809">Transit peptide</keyword>
<keyword id="KW-0813">Transport</keyword>